<feature type="chain" id="PRO_0000449263" description="Type VI secretion system sheath protein TssC1">
    <location>
        <begin position="1"/>
        <end position="498"/>
    </location>
</feature>
<feature type="helix" evidence="6">
    <location>
        <begin position="40"/>
        <end position="54"/>
    </location>
</feature>
<feature type="strand" evidence="6">
    <location>
        <begin position="55"/>
        <end position="58"/>
    </location>
</feature>
<feature type="helix" evidence="6">
    <location>
        <begin position="66"/>
        <end position="69"/>
    </location>
</feature>
<feature type="helix" evidence="6">
    <location>
        <begin position="70"/>
        <end position="86"/>
    </location>
</feature>
<feature type="helix" evidence="6">
    <location>
        <begin position="89"/>
        <end position="106"/>
    </location>
</feature>
<feature type="strand" evidence="6">
    <location>
        <begin position="111"/>
        <end position="120"/>
    </location>
</feature>
<feature type="helix" evidence="6">
    <location>
        <begin position="123"/>
        <end position="132"/>
    </location>
</feature>
<feature type="helix" evidence="6">
    <location>
        <begin position="135"/>
        <end position="139"/>
    </location>
</feature>
<feature type="helix" evidence="6">
    <location>
        <begin position="142"/>
        <end position="148"/>
    </location>
</feature>
<feature type="helix" evidence="6">
    <location>
        <begin position="149"/>
        <end position="153"/>
    </location>
</feature>
<feature type="strand" evidence="6">
    <location>
        <begin position="161"/>
        <end position="169"/>
    </location>
</feature>
<feature type="helix" evidence="6">
    <location>
        <begin position="173"/>
        <end position="188"/>
    </location>
</feature>
<feature type="strand" evidence="6">
    <location>
        <begin position="193"/>
        <end position="197"/>
    </location>
</feature>
<feature type="turn" evidence="6">
    <location>
        <begin position="199"/>
        <end position="203"/>
    </location>
</feature>
<feature type="strand" evidence="6">
    <location>
        <begin position="205"/>
        <end position="209"/>
    </location>
</feature>
<feature type="helix" evidence="6">
    <location>
        <begin position="219"/>
        <end position="221"/>
    </location>
</feature>
<feature type="helix" evidence="6">
    <location>
        <begin position="223"/>
        <end position="225"/>
    </location>
</feature>
<feature type="helix" evidence="6">
    <location>
        <begin position="226"/>
        <end position="232"/>
    </location>
</feature>
<feature type="strand" evidence="6">
    <location>
        <begin position="234"/>
        <end position="236"/>
    </location>
</feature>
<feature type="helix" evidence="6">
    <location>
        <begin position="237"/>
        <end position="239"/>
    </location>
</feature>
<feature type="strand" evidence="6">
    <location>
        <begin position="240"/>
        <end position="242"/>
    </location>
</feature>
<feature type="strand" evidence="6">
    <location>
        <begin position="254"/>
        <end position="258"/>
    </location>
</feature>
<feature type="strand" evidence="6">
    <location>
        <begin position="261"/>
        <end position="263"/>
    </location>
</feature>
<feature type="strand" evidence="6">
    <location>
        <begin position="274"/>
        <end position="277"/>
    </location>
</feature>
<feature type="helix" evidence="6">
    <location>
        <begin position="283"/>
        <end position="297"/>
    </location>
</feature>
<feature type="strand" evidence="6">
    <location>
        <begin position="298"/>
        <end position="301"/>
    </location>
</feature>
<feature type="turn" evidence="6">
    <location>
        <begin position="306"/>
        <end position="309"/>
    </location>
</feature>
<feature type="strand" evidence="6">
    <location>
        <begin position="318"/>
        <end position="320"/>
    </location>
</feature>
<feature type="strand" evidence="6">
    <location>
        <begin position="328"/>
        <end position="330"/>
    </location>
</feature>
<feature type="strand" evidence="6">
    <location>
        <begin position="332"/>
        <end position="335"/>
    </location>
</feature>
<feature type="helix" evidence="6">
    <location>
        <begin position="339"/>
        <end position="347"/>
    </location>
</feature>
<feature type="strand" evidence="6">
    <location>
        <begin position="353"/>
        <end position="355"/>
    </location>
</feature>
<feature type="strand" evidence="6">
    <location>
        <begin position="362"/>
        <end position="365"/>
    </location>
</feature>
<feature type="helix" evidence="6">
    <location>
        <begin position="379"/>
        <end position="387"/>
    </location>
</feature>
<feature type="helix" evidence="6">
    <location>
        <begin position="391"/>
        <end position="411"/>
    </location>
</feature>
<feature type="helix" evidence="6">
    <location>
        <begin position="418"/>
        <end position="429"/>
    </location>
</feature>
<feature type="strand" evidence="6">
    <location>
        <begin position="438"/>
        <end position="440"/>
    </location>
</feature>
<feature type="helix" evidence="6">
    <location>
        <begin position="444"/>
        <end position="447"/>
    </location>
</feature>
<feature type="strand" evidence="6">
    <location>
        <begin position="450"/>
        <end position="459"/>
    </location>
</feature>
<feature type="strand" evidence="6">
    <location>
        <begin position="463"/>
        <end position="465"/>
    </location>
</feature>
<feature type="strand" evidence="6">
    <location>
        <begin position="467"/>
        <end position="475"/>
    </location>
</feature>
<feature type="strand" evidence="6">
    <location>
        <begin position="481"/>
        <end position="488"/>
    </location>
</feature>
<feature type="turn" evidence="6">
    <location>
        <begin position="493"/>
        <end position="496"/>
    </location>
</feature>
<gene>
    <name evidence="4" type="primary">tssC1</name>
    <name type="ordered locus">PA0084</name>
</gene>
<dbReference type="EMBL" id="AE004091">
    <property type="protein sequence ID" value="AAG03474.1"/>
    <property type="molecule type" value="Genomic_DNA"/>
</dbReference>
<dbReference type="PIR" id="A83635">
    <property type="entry name" value="A83635"/>
</dbReference>
<dbReference type="RefSeq" id="NP_248774.1">
    <property type="nucleotide sequence ID" value="NC_002516.2"/>
</dbReference>
<dbReference type="PDB" id="5N8N">
    <property type="method" value="EM"/>
    <property type="resolution" value="3.28 A"/>
    <property type="chains" value="B/D/F/H/J/L/N/P/R/T/V/X/Z/b/d=38-498"/>
</dbReference>
<dbReference type="PDBsum" id="5N8N"/>
<dbReference type="SMR" id="Q9I748"/>
<dbReference type="STRING" id="208964.PA0084"/>
<dbReference type="PaxDb" id="208964-PA0084"/>
<dbReference type="GeneID" id="879464"/>
<dbReference type="KEGG" id="pae:PA0084"/>
<dbReference type="PATRIC" id="fig|208964.12.peg.88"/>
<dbReference type="PseudoCAP" id="PA0084"/>
<dbReference type="HOGENOM" id="CLU_018386_1_0_6"/>
<dbReference type="InParanoid" id="Q9I748"/>
<dbReference type="OrthoDB" id="9764000at2"/>
<dbReference type="PhylomeDB" id="Q9I748"/>
<dbReference type="BioCyc" id="PAER208964:G1FZ6-86-MONOMER"/>
<dbReference type="Proteomes" id="UP000002438">
    <property type="component" value="Chromosome"/>
</dbReference>
<dbReference type="InterPro" id="IPR010269">
    <property type="entry name" value="T6SS_TssC-like"/>
</dbReference>
<dbReference type="InterPro" id="IPR044032">
    <property type="entry name" value="TssC1_C"/>
</dbReference>
<dbReference type="InterPro" id="IPR044031">
    <property type="entry name" value="TssC1_N"/>
</dbReference>
<dbReference type="NCBIfam" id="TIGR03355">
    <property type="entry name" value="VI_chp_2"/>
    <property type="match status" value="1"/>
</dbReference>
<dbReference type="PANTHER" id="PTHR35565">
    <property type="entry name" value="CYTOPLASMIC PROTEIN-RELATED"/>
    <property type="match status" value="1"/>
</dbReference>
<dbReference type="PANTHER" id="PTHR35565:SF3">
    <property type="entry name" value="TYPE VI SECRETION SYSTEM SHEATH PROTEIN TSSC1"/>
    <property type="match status" value="1"/>
</dbReference>
<dbReference type="Pfam" id="PF05943">
    <property type="entry name" value="VipB"/>
    <property type="match status" value="1"/>
</dbReference>
<dbReference type="Pfam" id="PF18945">
    <property type="entry name" value="VipB_2"/>
    <property type="match status" value="1"/>
</dbReference>
<proteinExistence type="evidence at protein level"/>
<accession>Q9I748</accession>
<reference key="1">
    <citation type="journal article" date="2000" name="Nature">
        <title>Complete genome sequence of Pseudomonas aeruginosa PAO1, an opportunistic pathogen.</title>
        <authorList>
            <person name="Stover C.K."/>
            <person name="Pham X.-Q.T."/>
            <person name="Erwin A.L."/>
            <person name="Mizoguchi S.D."/>
            <person name="Warrener P."/>
            <person name="Hickey M.J."/>
            <person name="Brinkman F.S.L."/>
            <person name="Hufnagle W.O."/>
            <person name="Kowalik D.J."/>
            <person name="Lagrou M."/>
            <person name="Garber R.L."/>
            <person name="Goltry L."/>
            <person name="Tolentino E."/>
            <person name="Westbrock-Wadman S."/>
            <person name="Yuan Y."/>
            <person name="Brody L.L."/>
            <person name="Coulter S.N."/>
            <person name="Folger K.R."/>
            <person name="Kas A."/>
            <person name="Larbig K."/>
            <person name="Lim R.M."/>
            <person name="Smith K.A."/>
            <person name="Spencer D.H."/>
            <person name="Wong G.K.-S."/>
            <person name="Wu Z."/>
            <person name="Paulsen I.T."/>
            <person name="Reizer J."/>
            <person name="Saier M.H. Jr."/>
            <person name="Hancock R.E.W."/>
            <person name="Lory S."/>
            <person name="Olson M.V."/>
        </authorList>
    </citation>
    <scope>NUCLEOTIDE SEQUENCE [LARGE SCALE GENOMIC DNA]</scope>
    <source>
        <strain>ATCC 15692 / DSM 22644 / CIP 104116 / JCM 14847 / LMG 12228 / 1C / PRS 101 / PAO1</strain>
    </source>
</reference>
<reference key="2">
    <citation type="journal article" date="2013" name="J. Biol. Chem.">
        <title>The HsiB1C1 (TssB-TssC) complex of the Pseudomonas aeruginosa type VI secretion system forms a bacteriophage tail sheathlike structure.</title>
        <authorList>
            <person name="Lossi N.S."/>
            <person name="Manoli E."/>
            <person name="Foerster A."/>
            <person name="Dajani R."/>
            <person name="Pape T."/>
            <person name="Freemont P."/>
            <person name="Filloux A."/>
        </authorList>
    </citation>
    <scope>FUNCTION</scope>
    <scope>INTERACTION WITH TSSB1</scope>
    <scope>DISRUPTION PHENOTYPE</scope>
    <scope>DOMAIN</scope>
</reference>
<reference key="3">
    <citation type="journal article" date="2016" name="EMBO J.">
        <title>TssA forms a gp6-like ring attached to the type VI secretion sheath.</title>
        <authorList>
            <person name="Planamente S."/>
            <person name="Salih O."/>
            <person name="Manoli E."/>
            <person name="Albesa-Jove D."/>
            <person name="Freemont P.S."/>
            <person name="Filloux A."/>
        </authorList>
    </citation>
    <scope>INTERACTION WITH TSSA1</scope>
</reference>
<reference evidence="5" key="4">
    <citation type="journal article" date="2018" name="Structure">
        <title>Atomic Structure of Type VI Contractile Sheath from Pseudomonas aeruginosa.</title>
        <authorList>
            <person name="Salih O."/>
            <person name="He S."/>
            <person name="Planamente S."/>
            <person name="Stach L."/>
            <person name="MacDonald J.T."/>
            <person name="Manoli E."/>
            <person name="Scheres S.H.W."/>
            <person name="Filloux A."/>
            <person name="Freemont P.S."/>
        </authorList>
    </citation>
    <scope>STRUCTURE BY ELECTRON MICROSCOPY (3.28 ANGSTROMS) OF 38-498</scope>
    <scope>FUNCTION</scope>
    <scope>INTERACTION WITH TSSB1</scope>
</reference>
<comment type="function">
    <text evidence="1 3">Core component of the H1 type VI (H1-T6SS) secretion system that plays a role in the release of toxins targeting both eukaryotic and prokaryotic species. Forms the sheath of the structure by assembling into tubules together with TssB1 resulting in the stacking of cogwheel-like structures showing predominantly a 12-fold symmetry (PubMed:23341461, PubMed:29307484). The sheath contracts to provide the energy needed for effector delivery (PubMed:29307484).</text>
</comment>
<comment type="subunit">
    <text evidence="1 2 3">Forms a heterodimer with TssB1. Heterodimers assemble to form the sheath of the T6SS machinery (PubMed:23341461, PubMed:29307484). Interacts with TssA1 (PubMed:27288401).</text>
</comment>
<comment type="domain">
    <text evidence="1">The C-terminal region is required for cogwheel and tubule formation.</text>
</comment>
<comment type="disruption phenotype">
    <text evidence="1">Deletion mutant shows a clear reduction in E. coli killing and a lack of ability to secrete Hcp1, VgrG1a as well as Tse3.</text>
</comment>
<name>TSSC1_PSEAE</name>
<keyword id="KW-0002">3D-structure</keyword>
<keyword id="KW-1185">Reference proteome</keyword>
<sequence>MAELSTENLAQGQTTTEQTSEFASLLLQEFKPKTERAREAVETAVRTLAEHALEQTSLISNDAIKSIESIIAALDAKLTAQVNLIMHHADFQQLESAWRGLHYLVNNTETDEQLKIRVLNISKPELHKTLKKFKGTTWDQSPIFKKLYEEEYGQFGGEPYGCLVGDYYFDQSPPDVELLGEMAKISAAMHAPFISAASPTVMGMGSWQELSNPRDLTKIFTTPEYAGWRSLRESEDSRYIGLTMPRFLARLPYGAKTDPVEEFAFEEETDGADSSKYAWANSAYAMAVNINRSFKLYGWCSRIRGVESGGEVQGLPAHTFPTDDGGVDMKCPTEIAISDRREAELAKNGFMPLLHKKNTDFAAFIGAQSLQKPAEYDDPDATANANLAARLPYLFATCRFAHYLKCIVRDKIGSFKEKDEMQRWLQDWILNYVDGDPAHSTETTKAQHPLAAAEVVVEEVEGNPGYYNSKFFLRPHYQLEGLTVSLRLVSKLPSAKEA</sequence>
<protein>
    <recommendedName>
        <fullName evidence="4">Type VI secretion system sheath protein TssC1</fullName>
    </recommendedName>
    <alternativeName>
        <fullName>Sheath protein HsiC1</fullName>
    </alternativeName>
</protein>
<organism>
    <name type="scientific">Pseudomonas aeruginosa (strain ATCC 15692 / DSM 22644 / CIP 104116 / JCM 14847 / LMG 12228 / 1C / PRS 101 / PAO1)</name>
    <dbReference type="NCBI Taxonomy" id="208964"/>
    <lineage>
        <taxon>Bacteria</taxon>
        <taxon>Pseudomonadati</taxon>
        <taxon>Pseudomonadota</taxon>
        <taxon>Gammaproteobacteria</taxon>
        <taxon>Pseudomonadales</taxon>
        <taxon>Pseudomonadaceae</taxon>
        <taxon>Pseudomonas</taxon>
    </lineage>
</organism>
<evidence type="ECO:0000269" key="1">
    <source>
    </source>
</evidence>
<evidence type="ECO:0000269" key="2">
    <source>
    </source>
</evidence>
<evidence type="ECO:0000269" key="3">
    <source>
    </source>
</evidence>
<evidence type="ECO:0000303" key="4">
    <source>
    </source>
</evidence>
<evidence type="ECO:0007744" key="5">
    <source>
        <dbReference type="PDB" id="5N8N"/>
    </source>
</evidence>
<evidence type="ECO:0007829" key="6">
    <source>
        <dbReference type="PDB" id="5N8N"/>
    </source>
</evidence>